<accession>Q7NEW2</accession>
<protein>
    <recommendedName>
        <fullName evidence="1">ATP-dependent Clp protease proteolytic subunit 1</fullName>
        <ecNumber evidence="1">3.4.21.92</ecNumber>
    </recommendedName>
    <alternativeName>
        <fullName evidence="1">Endopeptidase Clp 1</fullName>
    </alternativeName>
</protein>
<gene>
    <name evidence="1" type="primary">clpP1</name>
    <name type="ordered locus">gll3766</name>
</gene>
<keyword id="KW-0963">Cytoplasm</keyword>
<keyword id="KW-0378">Hydrolase</keyword>
<keyword id="KW-0645">Protease</keyword>
<keyword id="KW-1185">Reference proteome</keyword>
<keyword id="KW-0720">Serine protease</keyword>
<proteinExistence type="inferred from homology"/>
<evidence type="ECO:0000255" key="1">
    <source>
        <dbReference type="HAMAP-Rule" id="MF_00444"/>
    </source>
</evidence>
<comment type="function">
    <text evidence="1">Cleaves peptides in various proteins in a process that requires ATP hydrolysis. Has a chymotrypsin-like activity. Plays a major role in the degradation of misfolded proteins.</text>
</comment>
<comment type="catalytic activity">
    <reaction evidence="1">
        <text>Hydrolysis of proteins to small peptides in the presence of ATP and magnesium. alpha-casein is the usual test substrate. In the absence of ATP, only oligopeptides shorter than five residues are hydrolyzed (such as succinyl-Leu-Tyr-|-NHMec, and Leu-Tyr-Leu-|-Tyr-Trp, in which cleavage of the -Tyr-|-Leu- and -Tyr-|-Trp bonds also occurs).</text>
        <dbReference type="EC" id="3.4.21.92"/>
    </reaction>
</comment>
<comment type="subunit">
    <text evidence="1">Fourteen ClpP subunits assemble into 2 heptameric rings which stack back to back to give a disk-like structure with a central cavity, resembling the structure of eukaryotic proteasomes.</text>
</comment>
<comment type="subcellular location">
    <subcellularLocation>
        <location evidence="1">Cytoplasm</location>
    </subcellularLocation>
</comment>
<comment type="similarity">
    <text evidence="1">Belongs to the peptidase S14 family.</text>
</comment>
<reference key="1">
    <citation type="journal article" date="2003" name="DNA Res.">
        <title>Complete genome structure of Gloeobacter violaceus PCC 7421, a cyanobacterium that lacks thylakoids.</title>
        <authorList>
            <person name="Nakamura Y."/>
            <person name="Kaneko T."/>
            <person name="Sato S."/>
            <person name="Mimuro M."/>
            <person name="Miyashita H."/>
            <person name="Tsuchiya T."/>
            <person name="Sasamoto S."/>
            <person name="Watanabe A."/>
            <person name="Kawashima K."/>
            <person name="Kishida Y."/>
            <person name="Kiyokawa C."/>
            <person name="Kohara M."/>
            <person name="Matsumoto M."/>
            <person name="Matsuno A."/>
            <person name="Nakazaki N."/>
            <person name="Shimpo S."/>
            <person name="Takeuchi C."/>
            <person name="Yamada M."/>
            <person name="Tabata S."/>
        </authorList>
    </citation>
    <scope>NUCLEOTIDE SEQUENCE [LARGE SCALE GENOMIC DNA]</scope>
    <source>
        <strain>ATCC 29082 / PCC 7421</strain>
    </source>
</reference>
<sequence length="197" mass="21757">MPIGIPKVPYRLPGGQSQWIDIFNRLALDRIIFLGREVDDEIANAIIASMLYLDSEDPEKDIFLYINSPGGSVSAGLAIYDTMQHVRADVATMCVGLAASMGSFLLTAGAKGKRTSLPHSRIMIHQPLGGAQGQATDIGIQAKEILYTKDRLNQILSERTGQPLERIERDTDRDFFMSAEDAKQYGLIDQVVQHRPV</sequence>
<organism>
    <name type="scientific">Gloeobacter violaceus (strain ATCC 29082 / PCC 7421)</name>
    <dbReference type="NCBI Taxonomy" id="251221"/>
    <lineage>
        <taxon>Bacteria</taxon>
        <taxon>Bacillati</taxon>
        <taxon>Cyanobacteriota</taxon>
        <taxon>Cyanophyceae</taxon>
        <taxon>Gloeobacterales</taxon>
        <taxon>Gloeobacteraceae</taxon>
        <taxon>Gloeobacter</taxon>
    </lineage>
</organism>
<feature type="chain" id="PRO_0000179562" description="ATP-dependent Clp protease proteolytic subunit 1">
    <location>
        <begin position="1"/>
        <end position="197"/>
    </location>
</feature>
<feature type="active site" description="Nucleophile" evidence="1">
    <location>
        <position position="100"/>
    </location>
</feature>
<feature type="active site" evidence="1">
    <location>
        <position position="125"/>
    </location>
</feature>
<name>CLPP1_GLOVI</name>
<dbReference type="EC" id="3.4.21.92" evidence="1"/>
<dbReference type="EMBL" id="BA000045">
    <property type="protein sequence ID" value="BAC91707.1"/>
    <property type="molecule type" value="Genomic_DNA"/>
</dbReference>
<dbReference type="RefSeq" id="NP_926712.1">
    <property type="nucleotide sequence ID" value="NC_005125.1"/>
</dbReference>
<dbReference type="RefSeq" id="WP_011143755.1">
    <property type="nucleotide sequence ID" value="NC_005125.1"/>
</dbReference>
<dbReference type="SMR" id="Q7NEW2"/>
<dbReference type="FunCoup" id="Q7NEW2">
    <property type="interactions" value="316"/>
</dbReference>
<dbReference type="STRING" id="251221.gene:10761283"/>
<dbReference type="MEROPS" id="S14.001"/>
<dbReference type="EnsemblBacteria" id="BAC91707">
    <property type="protein sequence ID" value="BAC91707"/>
    <property type="gene ID" value="BAC91707"/>
</dbReference>
<dbReference type="KEGG" id="gvi:gll3766"/>
<dbReference type="PATRIC" id="fig|251221.4.peg.3801"/>
<dbReference type="eggNOG" id="COG0740">
    <property type="taxonomic scope" value="Bacteria"/>
</dbReference>
<dbReference type="HOGENOM" id="CLU_058707_3_2_3"/>
<dbReference type="InParanoid" id="Q7NEW2"/>
<dbReference type="OrthoDB" id="516793at2"/>
<dbReference type="PhylomeDB" id="Q7NEW2"/>
<dbReference type="Proteomes" id="UP000000557">
    <property type="component" value="Chromosome"/>
</dbReference>
<dbReference type="GO" id="GO:0005737">
    <property type="term" value="C:cytoplasm"/>
    <property type="evidence" value="ECO:0007669"/>
    <property type="project" value="UniProtKB-SubCell"/>
</dbReference>
<dbReference type="GO" id="GO:0009368">
    <property type="term" value="C:endopeptidase Clp complex"/>
    <property type="evidence" value="ECO:0000318"/>
    <property type="project" value="GO_Central"/>
</dbReference>
<dbReference type="GO" id="GO:0004176">
    <property type="term" value="F:ATP-dependent peptidase activity"/>
    <property type="evidence" value="ECO:0000318"/>
    <property type="project" value="GO_Central"/>
</dbReference>
<dbReference type="GO" id="GO:0051117">
    <property type="term" value="F:ATPase binding"/>
    <property type="evidence" value="ECO:0000318"/>
    <property type="project" value="GO_Central"/>
</dbReference>
<dbReference type="GO" id="GO:0004252">
    <property type="term" value="F:serine-type endopeptidase activity"/>
    <property type="evidence" value="ECO:0000318"/>
    <property type="project" value="GO_Central"/>
</dbReference>
<dbReference type="GO" id="GO:0006515">
    <property type="term" value="P:protein quality control for misfolded or incompletely synthesized proteins"/>
    <property type="evidence" value="ECO:0000318"/>
    <property type="project" value="GO_Central"/>
</dbReference>
<dbReference type="CDD" id="cd07017">
    <property type="entry name" value="S14_ClpP_2"/>
    <property type="match status" value="1"/>
</dbReference>
<dbReference type="FunFam" id="3.90.226.10:FF:000001">
    <property type="entry name" value="ATP-dependent Clp protease proteolytic subunit"/>
    <property type="match status" value="1"/>
</dbReference>
<dbReference type="Gene3D" id="3.90.226.10">
    <property type="entry name" value="2-enoyl-CoA Hydratase, Chain A, domain 1"/>
    <property type="match status" value="1"/>
</dbReference>
<dbReference type="HAMAP" id="MF_00444">
    <property type="entry name" value="ClpP"/>
    <property type="match status" value="1"/>
</dbReference>
<dbReference type="InterPro" id="IPR001907">
    <property type="entry name" value="ClpP"/>
</dbReference>
<dbReference type="InterPro" id="IPR029045">
    <property type="entry name" value="ClpP/crotonase-like_dom_sf"/>
</dbReference>
<dbReference type="InterPro" id="IPR023562">
    <property type="entry name" value="ClpP/TepA"/>
</dbReference>
<dbReference type="InterPro" id="IPR033135">
    <property type="entry name" value="ClpP_His_AS"/>
</dbReference>
<dbReference type="InterPro" id="IPR018215">
    <property type="entry name" value="ClpP_Ser_AS"/>
</dbReference>
<dbReference type="NCBIfam" id="NF001368">
    <property type="entry name" value="PRK00277.1"/>
    <property type="match status" value="1"/>
</dbReference>
<dbReference type="NCBIfam" id="NF009205">
    <property type="entry name" value="PRK12553.1"/>
    <property type="match status" value="1"/>
</dbReference>
<dbReference type="PANTHER" id="PTHR10381">
    <property type="entry name" value="ATP-DEPENDENT CLP PROTEASE PROTEOLYTIC SUBUNIT"/>
    <property type="match status" value="1"/>
</dbReference>
<dbReference type="PANTHER" id="PTHR10381:SF70">
    <property type="entry name" value="ATP-DEPENDENT CLP PROTEASE PROTEOLYTIC SUBUNIT"/>
    <property type="match status" value="1"/>
</dbReference>
<dbReference type="Pfam" id="PF00574">
    <property type="entry name" value="CLP_protease"/>
    <property type="match status" value="1"/>
</dbReference>
<dbReference type="PRINTS" id="PR00127">
    <property type="entry name" value="CLPPROTEASEP"/>
</dbReference>
<dbReference type="SUPFAM" id="SSF52096">
    <property type="entry name" value="ClpP/crotonase"/>
    <property type="match status" value="1"/>
</dbReference>
<dbReference type="PROSITE" id="PS00382">
    <property type="entry name" value="CLP_PROTEASE_HIS"/>
    <property type="match status" value="1"/>
</dbReference>
<dbReference type="PROSITE" id="PS00381">
    <property type="entry name" value="CLP_PROTEASE_SER"/>
    <property type="match status" value="1"/>
</dbReference>